<organism>
    <name type="scientific">Arabidopsis thaliana</name>
    <name type="common">Mouse-ear cress</name>
    <dbReference type="NCBI Taxonomy" id="3702"/>
    <lineage>
        <taxon>Eukaryota</taxon>
        <taxon>Viridiplantae</taxon>
        <taxon>Streptophyta</taxon>
        <taxon>Embryophyta</taxon>
        <taxon>Tracheophyta</taxon>
        <taxon>Spermatophyta</taxon>
        <taxon>Magnoliopsida</taxon>
        <taxon>eudicotyledons</taxon>
        <taxon>Gunneridae</taxon>
        <taxon>Pentapetalae</taxon>
        <taxon>rosids</taxon>
        <taxon>malvids</taxon>
        <taxon>Brassicales</taxon>
        <taxon>Brassicaceae</taxon>
        <taxon>Camelineae</taxon>
        <taxon>Arabidopsis</taxon>
    </lineage>
</organism>
<sequence>MYNVVVCLLTLSFLLLTGLSNTAEARVPYEAREGVWDQKVITEIKAEVGGSCSPHAHGRGPPNRPGSSNIPGSPKRCTKP</sequence>
<dbReference type="EMBL" id="AB018109">
    <property type="status" value="NOT_ANNOTATED_CDS"/>
    <property type="molecule type" value="Genomic_DNA"/>
</dbReference>
<dbReference type="EMBL" id="CP002688">
    <property type="protein sequence ID" value="ANM70857.1"/>
    <property type="molecule type" value="Genomic_DNA"/>
</dbReference>
<dbReference type="RefSeq" id="NP_001332435.1">
    <property type="nucleotide sequence ID" value="NM_001344939.1"/>
</dbReference>
<dbReference type="EnsemblPlants" id="AT5G51465.1">
    <property type="protein sequence ID" value="AT5G51465.1"/>
    <property type="gene ID" value="AT5G51465"/>
</dbReference>
<dbReference type="GeneID" id="28721262"/>
<dbReference type="Gramene" id="AT5G51465.1">
    <property type="protein sequence ID" value="AT5G51465.1"/>
    <property type="gene ID" value="AT5G51465"/>
</dbReference>
<dbReference type="KEGG" id="ath:AT5G51465"/>
<dbReference type="Araport" id="AT5G51465"/>
<dbReference type="TAIR" id="AT5G51465"/>
<dbReference type="InParanoid" id="A0A1P8BH24"/>
<dbReference type="OMA" id="PGSPKRC"/>
<dbReference type="PRO" id="PR:A0A1P8BH24"/>
<dbReference type="Proteomes" id="UP000006548">
    <property type="component" value="Chromosome 5"/>
</dbReference>
<dbReference type="ExpressionAtlas" id="A0A1P8BH24">
    <property type="expression patterns" value="baseline and differential"/>
</dbReference>
<dbReference type="GO" id="GO:0048046">
    <property type="term" value="C:apoplast"/>
    <property type="evidence" value="ECO:0000250"/>
    <property type="project" value="UniProtKB"/>
</dbReference>
<dbReference type="GO" id="GO:0005886">
    <property type="term" value="C:plasma membrane"/>
    <property type="evidence" value="ECO:0007669"/>
    <property type="project" value="UniProtKB-SubCell"/>
</dbReference>
<dbReference type="GO" id="GO:0030275">
    <property type="term" value="F:LRR domain binding"/>
    <property type="evidence" value="ECO:0000250"/>
    <property type="project" value="UniProtKB"/>
</dbReference>
<dbReference type="GO" id="GO:0033612">
    <property type="term" value="F:receptor serine/threonine kinase binding"/>
    <property type="evidence" value="ECO:0000250"/>
    <property type="project" value="UniProtKB"/>
</dbReference>
<feature type="signal peptide" evidence="2">
    <location>
        <begin position="1"/>
        <end position="25"/>
    </location>
</feature>
<feature type="propeptide" id="PRO_0000457248" description="Removed in mature form" evidence="1">
    <location>
        <begin position="26"/>
        <end status="unknown"/>
    </location>
</feature>
<feature type="peptide" id="PRO_0000457249" description="Serine rich endogenous peptide 18" evidence="1">
    <location>
        <begin status="unknown"/>
        <end position="80"/>
    </location>
</feature>
<feature type="region of interest" description="Disordered" evidence="3">
    <location>
        <begin position="50"/>
        <end position="80"/>
    </location>
</feature>
<feature type="short sequence motif" description="SCOOP motif" evidence="6">
    <location>
        <begin position="45"/>
        <end position="59"/>
    </location>
</feature>
<feature type="short sequence motif" description="SxS motif essential for MIK2 binding" evidence="1">
    <location>
        <begin position="51"/>
        <end position="53"/>
    </location>
</feature>
<comment type="function">
    <text evidence="1">Brassicaceae-specific phytocytokine (plant endogenous peptide released into the apoplast) perceived by MIK2 in a BAK1/SERK3 and SERK4 coreceptors-dependent manner, that modulates various physiological and antimicrobial processes including growth prevention and reactive oxygen species (ROS) response regulation.</text>
</comment>
<comment type="subunit">
    <text evidence="1">Interacts with MIK2 (via extracellular leucine-rich repeat domain); this interaction triggers the formation of complex between MIK2 and the BAK1/SERK3 and SERK4 coreceptors, and subsequent BAK1 activation by phosphorylation.</text>
</comment>
<comment type="subcellular location">
    <subcellularLocation>
        <location evidence="1">Cell membrane</location>
    </subcellularLocation>
    <subcellularLocation>
        <location evidence="1">Secreted</location>
        <location evidence="1">Extracellular space</location>
        <location evidence="1">Apoplast</location>
    </subcellularLocation>
    <text evidence="1">The precursor of SCOOP18, PROSCOOP18, accumulates at the plasma membrane and is proteolytically cleaved to release the SCOOP18 in the apoplasm.</text>
</comment>
<comment type="similarity">
    <text evidence="5">Belongs to the serine rich endogenous peptide (SCOOP) phytocytokine family.</text>
</comment>
<evidence type="ECO:0000250" key="1">
    <source>
        <dbReference type="UniProtKB" id="B3H7I1"/>
    </source>
</evidence>
<evidence type="ECO:0000255" key="2"/>
<evidence type="ECO:0000256" key="3">
    <source>
        <dbReference type="SAM" id="MobiDB-lite"/>
    </source>
</evidence>
<evidence type="ECO:0000303" key="4">
    <source>
    </source>
</evidence>
<evidence type="ECO:0000305" key="5"/>
<evidence type="ECO:0000305" key="6">
    <source>
    </source>
</evidence>
<evidence type="ECO:0000312" key="7">
    <source>
        <dbReference type="Araport" id="AT5G51465"/>
    </source>
</evidence>
<evidence type="ECO:0000312" key="8">
    <source>
        <dbReference type="EMBL" id="AB018109"/>
    </source>
</evidence>
<protein>
    <recommendedName>
        <fullName evidence="4">Serine rich endogenous peptide 18</fullName>
        <shortName evidence="4">AtSCOOP18</shortName>
    </recommendedName>
    <alternativeName>
        <fullName evidence="4">Phytocytokine SCOOP18</fullName>
    </alternativeName>
    <alternativeName>
        <fullName evidence="4">Precursor of serine rich endogenous peptide phytocytokine 18</fullName>
    </alternativeName>
</protein>
<keyword id="KW-0052">Apoplast</keyword>
<keyword id="KW-1003">Cell membrane</keyword>
<keyword id="KW-0165">Cleavage on pair of basic residues</keyword>
<keyword id="KW-0472">Membrane</keyword>
<keyword id="KW-1185">Reference proteome</keyword>
<keyword id="KW-0964">Secreted</keyword>
<keyword id="KW-0732">Signal</keyword>
<reference key="1">
    <citation type="journal article" date="2000" name="DNA Res.">
        <title>Structural analysis of Arabidopsis thaliana chromosome 5. X. Sequence features of the regions of 3,076,755 bp covered by sixty P1 and TAC clones.</title>
        <authorList>
            <person name="Sato S."/>
            <person name="Nakamura Y."/>
            <person name="Kaneko T."/>
            <person name="Katoh T."/>
            <person name="Asamizu E."/>
            <person name="Kotani H."/>
            <person name="Tabata S."/>
        </authorList>
    </citation>
    <scope>NUCLEOTIDE SEQUENCE [LARGE SCALE GENOMIC DNA]</scope>
    <source>
        <strain>cv. Columbia</strain>
    </source>
</reference>
<reference key="2">
    <citation type="journal article" date="2017" name="Plant J.">
        <title>Araport11: a complete reannotation of the Arabidopsis thaliana reference genome.</title>
        <authorList>
            <person name="Cheng C.Y."/>
            <person name="Krishnakumar V."/>
            <person name="Chan A.P."/>
            <person name="Thibaud-Nissen F."/>
            <person name="Schobel S."/>
            <person name="Town C.D."/>
        </authorList>
    </citation>
    <scope>GENOME REANNOTATION</scope>
    <source>
        <strain>cv. Columbia</strain>
    </source>
</reference>
<reference key="3">
    <citation type="journal article" date="2019" name="J. Exp. Bot.">
        <title>The SCOOP12 peptide regulates defense response and root elongation in Arabidopsis thaliana.</title>
        <authorList>
            <person name="Gully K."/>
            <person name="Pelletier S."/>
            <person name="Guillou M.-C."/>
            <person name="Ferrand M."/>
            <person name="Aligon S."/>
            <person name="Pokotylo I."/>
            <person name="Perrin A."/>
            <person name="Vergne E."/>
            <person name="Fagard M."/>
            <person name="Ruelland E."/>
            <person name="Grappin P."/>
            <person name="Bucher E."/>
            <person name="Renou J.-P."/>
            <person name="Aubourg S."/>
        </authorList>
    </citation>
    <scope>GENE FAMILY</scope>
    <source>
        <strain>cv. Columbia</strain>
        <strain>cv. Wassilewskija</strain>
    </source>
</reference>
<reference key="4">
    <citation type="journal article" date="2021" name="Nat. Commun.">
        <title>The Arabidopsis MIK2 receptor elicits immunity by sensing a conserved signature from phytocytokines and microbes.</title>
        <authorList>
            <person name="Hou S."/>
            <person name="Liu D."/>
            <person name="Huang S."/>
            <person name="Luo D."/>
            <person name="Liu Z."/>
            <person name="Xiang Q."/>
            <person name="Wang P."/>
            <person name="Mu R."/>
            <person name="Han Z."/>
            <person name="Chen S."/>
            <person name="Chai J."/>
            <person name="Shan L."/>
            <person name="He P."/>
        </authorList>
    </citation>
    <scope>GENE FAMILY</scope>
    <scope>NOMENCLATURE</scope>
    <source>
        <strain>cv. Columbia</strain>
    </source>
</reference>
<name>SOP18_ARATH</name>
<accession>A0A1P8BH24</accession>
<proteinExistence type="inferred from homology"/>
<gene>
    <name evidence="4" type="primary">PROSCOOP18</name>
    <name evidence="4" type="synonym">SCOOP18</name>
    <name evidence="7" type="ordered locus">At5g51465</name>
    <name evidence="8" type="ORF">K17N15</name>
</gene>